<organism>
    <name type="scientific">Mycobacterium leprae (strain Br4923)</name>
    <dbReference type="NCBI Taxonomy" id="561304"/>
    <lineage>
        <taxon>Bacteria</taxon>
        <taxon>Bacillati</taxon>
        <taxon>Actinomycetota</taxon>
        <taxon>Actinomycetes</taxon>
        <taxon>Mycobacteriales</taxon>
        <taxon>Mycobacteriaceae</taxon>
        <taxon>Mycobacterium</taxon>
    </lineage>
</organism>
<reference key="1">
    <citation type="journal article" date="2009" name="Nat. Genet.">
        <title>Comparative genomic and phylogeographic analysis of Mycobacterium leprae.</title>
        <authorList>
            <person name="Monot M."/>
            <person name="Honore N."/>
            <person name="Garnier T."/>
            <person name="Zidane N."/>
            <person name="Sherafi D."/>
            <person name="Paniz-Mondolfi A."/>
            <person name="Matsuoka M."/>
            <person name="Taylor G.M."/>
            <person name="Donoghue H.D."/>
            <person name="Bouwman A."/>
            <person name="Mays S."/>
            <person name="Watson C."/>
            <person name="Lockwood D."/>
            <person name="Khamispour A."/>
            <person name="Dowlati Y."/>
            <person name="Jianping S."/>
            <person name="Rea T.H."/>
            <person name="Vera-Cabrera L."/>
            <person name="Stefani M.M."/>
            <person name="Banu S."/>
            <person name="Macdonald M."/>
            <person name="Sapkota B.R."/>
            <person name="Spencer J.S."/>
            <person name="Thomas J."/>
            <person name="Harshman K."/>
            <person name="Singh P."/>
            <person name="Busso P."/>
            <person name="Gattiker A."/>
            <person name="Rougemont J."/>
            <person name="Brennan P.J."/>
            <person name="Cole S.T."/>
        </authorList>
    </citation>
    <scope>NUCLEOTIDE SEQUENCE [LARGE SCALE GENOMIC DNA]</scope>
    <source>
        <strain>Br4923</strain>
    </source>
</reference>
<proteinExistence type="inferred from homology"/>
<name>FOLD_MYCLB</name>
<keyword id="KW-0028">Amino-acid biosynthesis</keyword>
<keyword id="KW-0368">Histidine biosynthesis</keyword>
<keyword id="KW-0378">Hydrolase</keyword>
<keyword id="KW-0486">Methionine biosynthesis</keyword>
<keyword id="KW-0511">Multifunctional enzyme</keyword>
<keyword id="KW-0521">NADP</keyword>
<keyword id="KW-0554">One-carbon metabolism</keyword>
<keyword id="KW-0560">Oxidoreductase</keyword>
<keyword id="KW-0658">Purine biosynthesis</keyword>
<dbReference type="EC" id="1.5.1.5" evidence="1"/>
<dbReference type="EC" id="3.5.4.9" evidence="1"/>
<dbReference type="EMBL" id="FM211192">
    <property type="protein sequence ID" value="CAR70768.1"/>
    <property type="molecule type" value="Genomic_DNA"/>
</dbReference>
<dbReference type="SMR" id="B8ZUV4"/>
<dbReference type="KEGG" id="mlb:MLBr00674"/>
<dbReference type="HOGENOM" id="CLU_034045_3_0_11"/>
<dbReference type="UniPathway" id="UPA00193"/>
<dbReference type="Proteomes" id="UP000006900">
    <property type="component" value="Chromosome"/>
</dbReference>
<dbReference type="GO" id="GO:0005829">
    <property type="term" value="C:cytosol"/>
    <property type="evidence" value="ECO:0007669"/>
    <property type="project" value="TreeGrafter"/>
</dbReference>
<dbReference type="GO" id="GO:0004477">
    <property type="term" value="F:methenyltetrahydrofolate cyclohydrolase activity"/>
    <property type="evidence" value="ECO:0007669"/>
    <property type="project" value="UniProtKB-UniRule"/>
</dbReference>
<dbReference type="GO" id="GO:0004488">
    <property type="term" value="F:methylenetetrahydrofolate dehydrogenase (NADP+) activity"/>
    <property type="evidence" value="ECO:0007669"/>
    <property type="project" value="UniProtKB-UniRule"/>
</dbReference>
<dbReference type="GO" id="GO:0000105">
    <property type="term" value="P:L-histidine biosynthetic process"/>
    <property type="evidence" value="ECO:0007669"/>
    <property type="project" value="UniProtKB-KW"/>
</dbReference>
<dbReference type="GO" id="GO:0009086">
    <property type="term" value="P:methionine biosynthetic process"/>
    <property type="evidence" value="ECO:0007669"/>
    <property type="project" value="UniProtKB-KW"/>
</dbReference>
<dbReference type="GO" id="GO:0006164">
    <property type="term" value="P:purine nucleotide biosynthetic process"/>
    <property type="evidence" value="ECO:0007669"/>
    <property type="project" value="UniProtKB-KW"/>
</dbReference>
<dbReference type="GO" id="GO:0035999">
    <property type="term" value="P:tetrahydrofolate interconversion"/>
    <property type="evidence" value="ECO:0007669"/>
    <property type="project" value="UniProtKB-UniRule"/>
</dbReference>
<dbReference type="CDD" id="cd01080">
    <property type="entry name" value="NAD_bind_m-THF_DH_Cyclohyd"/>
    <property type="match status" value="1"/>
</dbReference>
<dbReference type="FunFam" id="3.40.50.720:FF:000094">
    <property type="entry name" value="Bifunctional protein FolD"/>
    <property type="match status" value="1"/>
</dbReference>
<dbReference type="FunFam" id="3.40.50.10860:FF:000005">
    <property type="entry name" value="C-1-tetrahydrofolate synthase, cytoplasmic, putative"/>
    <property type="match status" value="1"/>
</dbReference>
<dbReference type="Gene3D" id="3.40.50.10860">
    <property type="entry name" value="Leucine Dehydrogenase, chain A, domain 1"/>
    <property type="match status" value="1"/>
</dbReference>
<dbReference type="Gene3D" id="3.40.50.720">
    <property type="entry name" value="NAD(P)-binding Rossmann-like Domain"/>
    <property type="match status" value="1"/>
</dbReference>
<dbReference type="HAMAP" id="MF_01576">
    <property type="entry name" value="THF_DHG_CYH"/>
    <property type="match status" value="1"/>
</dbReference>
<dbReference type="InterPro" id="IPR046346">
    <property type="entry name" value="Aminoacid_DH-like_N_sf"/>
</dbReference>
<dbReference type="InterPro" id="IPR036291">
    <property type="entry name" value="NAD(P)-bd_dom_sf"/>
</dbReference>
<dbReference type="InterPro" id="IPR000672">
    <property type="entry name" value="THF_DH/CycHdrlase"/>
</dbReference>
<dbReference type="InterPro" id="IPR020630">
    <property type="entry name" value="THF_DH/CycHdrlase_cat_dom"/>
</dbReference>
<dbReference type="InterPro" id="IPR020631">
    <property type="entry name" value="THF_DH/CycHdrlase_NAD-bd_dom"/>
</dbReference>
<dbReference type="NCBIfam" id="NF010789">
    <property type="entry name" value="PRK14193.1"/>
    <property type="match status" value="1"/>
</dbReference>
<dbReference type="PANTHER" id="PTHR48099:SF5">
    <property type="entry name" value="C-1-TETRAHYDROFOLATE SYNTHASE, CYTOPLASMIC"/>
    <property type="match status" value="1"/>
</dbReference>
<dbReference type="PANTHER" id="PTHR48099">
    <property type="entry name" value="C-1-TETRAHYDROFOLATE SYNTHASE, CYTOPLASMIC-RELATED"/>
    <property type="match status" value="1"/>
</dbReference>
<dbReference type="Pfam" id="PF00763">
    <property type="entry name" value="THF_DHG_CYH"/>
    <property type="match status" value="1"/>
</dbReference>
<dbReference type="Pfam" id="PF02882">
    <property type="entry name" value="THF_DHG_CYH_C"/>
    <property type="match status" value="1"/>
</dbReference>
<dbReference type="PRINTS" id="PR00085">
    <property type="entry name" value="THFDHDRGNASE"/>
</dbReference>
<dbReference type="SUPFAM" id="SSF53223">
    <property type="entry name" value="Aminoacid dehydrogenase-like, N-terminal domain"/>
    <property type="match status" value="1"/>
</dbReference>
<dbReference type="SUPFAM" id="SSF51735">
    <property type="entry name" value="NAD(P)-binding Rossmann-fold domains"/>
    <property type="match status" value="1"/>
</dbReference>
<comment type="function">
    <text evidence="1">Catalyzes the oxidation of 5,10-methylenetetrahydrofolate to 5,10-methenyltetrahydrofolate and then the hydrolysis of 5,10-methenyltetrahydrofolate to 10-formyltetrahydrofolate.</text>
</comment>
<comment type="catalytic activity">
    <reaction evidence="1">
        <text>(6R)-5,10-methylene-5,6,7,8-tetrahydrofolate + NADP(+) = (6R)-5,10-methenyltetrahydrofolate + NADPH</text>
        <dbReference type="Rhea" id="RHEA:22812"/>
        <dbReference type="ChEBI" id="CHEBI:15636"/>
        <dbReference type="ChEBI" id="CHEBI:57455"/>
        <dbReference type="ChEBI" id="CHEBI:57783"/>
        <dbReference type="ChEBI" id="CHEBI:58349"/>
        <dbReference type="EC" id="1.5.1.5"/>
    </reaction>
</comment>
<comment type="catalytic activity">
    <reaction evidence="1">
        <text>(6R)-5,10-methenyltetrahydrofolate + H2O = (6R)-10-formyltetrahydrofolate + H(+)</text>
        <dbReference type="Rhea" id="RHEA:23700"/>
        <dbReference type="ChEBI" id="CHEBI:15377"/>
        <dbReference type="ChEBI" id="CHEBI:15378"/>
        <dbReference type="ChEBI" id="CHEBI:57455"/>
        <dbReference type="ChEBI" id="CHEBI:195366"/>
        <dbReference type="EC" id="3.5.4.9"/>
    </reaction>
</comment>
<comment type="pathway">
    <text evidence="1">One-carbon metabolism; tetrahydrofolate interconversion.</text>
</comment>
<comment type="subunit">
    <text evidence="1">Homodimer.</text>
</comment>
<comment type="similarity">
    <text evidence="1">Belongs to the tetrahydrofolate dehydrogenase/cyclohydrolase family.</text>
</comment>
<feature type="chain" id="PRO_1000185623" description="Bifunctional protein FolD">
    <location>
        <begin position="1"/>
        <end position="282"/>
    </location>
</feature>
<feature type="binding site" evidence="1">
    <location>
        <begin position="165"/>
        <end position="167"/>
    </location>
    <ligand>
        <name>NADP(+)</name>
        <dbReference type="ChEBI" id="CHEBI:58349"/>
    </ligand>
</feature>
<feature type="binding site" evidence="1">
    <location>
        <position position="192"/>
    </location>
    <ligand>
        <name>NADP(+)</name>
        <dbReference type="ChEBI" id="CHEBI:58349"/>
    </ligand>
</feature>
<feature type="binding site" evidence="1">
    <location>
        <position position="233"/>
    </location>
    <ligand>
        <name>NADP(+)</name>
        <dbReference type="ChEBI" id="CHEBI:58349"/>
    </ligand>
</feature>
<gene>
    <name evidence="1" type="primary">folD</name>
    <name type="ordered locus">MLBr00674</name>
</gene>
<sequence length="282" mass="29835">MGAITLDGKATRDEILIDLKQRVAALTESGRTPGLGTILVGDDPGSHAYVRGKHADCAKVGITSIRRDLPVDITTAVLHDTIEELNANPDCTGYIVQLPLPKYLDENTALERVDPAKDADGLHPTNLGRLVLSTPAPLPCTARGILHLLRRYGVEIAGTHVVIIGRGVTVGRPLGLLLTRRSENATVTLCHTGTRNLAALTKQADIIVAAVGVPHLLTADMVRPGAVVVDVGVSRVETRLVGDVHPDVWEVAGHVSPNPGGVGPLTRVFLLTNVVELAEGRQ</sequence>
<evidence type="ECO:0000255" key="1">
    <source>
        <dbReference type="HAMAP-Rule" id="MF_01576"/>
    </source>
</evidence>
<protein>
    <recommendedName>
        <fullName evidence="1">Bifunctional protein FolD</fullName>
    </recommendedName>
    <domain>
        <recommendedName>
            <fullName evidence="1">Methylenetetrahydrofolate dehydrogenase</fullName>
            <ecNumber evidence="1">1.5.1.5</ecNumber>
        </recommendedName>
    </domain>
    <domain>
        <recommendedName>
            <fullName evidence="1">Methenyltetrahydrofolate cyclohydrolase</fullName>
            <ecNumber evidence="1">3.5.4.9</ecNumber>
        </recommendedName>
    </domain>
</protein>
<accession>B8ZUV4</accession>